<organism>
    <name type="scientific">Drosophila melanogaster</name>
    <name type="common">Fruit fly</name>
    <dbReference type="NCBI Taxonomy" id="7227"/>
    <lineage>
        <taxon>Eukaryota</taxon>
        <taxon>Metazoa</taxon>
        <taxon>Ecdysozoa</taxon>
        <taxon>Arthropoda</taxon>
        <taxon>Hexapoda</taxon>
        <taxon>Insecta</taxon>
        <taxon>Pterygota</taxon>
        <taxon>Neoptera</taxon>
        <taxon>Endopterygota</taxon>
        <taxon>Diptera</taxon>
        <taxon>Brachycera</taxon>
        <taxon>Muscomorpha</taxon>
        <taxon>Ephydroidea</taxon>
        <taxon>Drosophilidae</taxon>
        <taxon>Drosophila</taxon>
        <taxon>Sophophora</taxon>
    </lineage>
</organism>
<feature type="chain" id="PRO_0000434593" description="Early boundary activity protein 2">
    <location>
        <begin position="1"/>
        <end position="381"/>
    </location>
</feature>
<feature type="domain" description="BEN" evidence="1">
    <location>
        <begin position="268"/>
        <end position="365"/>
    </location>
</feature>
<feature type="region of interest" description="Disordered" evidence="2">
    <location>
        <begin position="210"/>
        <end position="245"/>
    </location>
</feature>
<proteinExistence type="evidence at protein level"/>
<evidence type="ECO:0000255" key="1">
    <source>
        <dbReference type="PROSITE-ProRule" id="PRU00784"/>
    </source>
</evidence>
<evidence type="ECO:0000256" key="2">
    <source>
        <dbReference type="SAM" id="MobiDB-lite"/>
    </source>
</evidence>
<evidence type="ECO:0000269" key="3">
    <source>
    </source>
</evidence>
<evidence type="ECO:0000269" key="4">
    <source>
    </source>
</evidence>
<evidence type="ECO:0000303" key="5">
    <source>
    </source>
</evidence>
<evidence type="ECO:0000312" key="6">
    <source>
        <dbReference type="FlyBase" id="FBgn0031435"/>
    </source>
</evidence>
<keyword id="KW-0238">DNA-binding</keyword>
<keyword id="KW-0539">Nucleus</keyword>
<keyword id="KW-1185">Reference proteome</keyword>
<keyword id="KW-0678">Repressor</keyword>
<keyword id="KW-0804">Transcription</keyword>
<keyword id="KW-0805">Transcription regulation</keyword>
<accession>Q9VQD6</accession>
<protein>
    <recommendedName>
        <fullName evidence="5">Early boundary activity protein 2</fullName>
    </recommendedName>
</protein>
<name>ELBA2_DROME</name>
<sequence>MAGGFRPYDQDSCPNLTNSEAPEFSMSVVCKTEPHYFHPQTAILPSVQYSHPYHHYLSQFAPNFVPYYYRLLSRPIMKQEEMDIENYINYEVAAQQTMMRQRTLKPLGQLQIQMPPPIIVNQPVKPVPVKAVPVRRSSPPKRRVINAQLVAVATASGGIKNIEPRVEPLPRLEESFKQQVAKIQKSQHHYEQLFGRLTSMLKTLNQRYDNDAEDVPAPPSKRPRHMSTSSSESHIPDTASEKDEKDTLVQYPHRVQKEDGSAVYVLGPNGTQITAHQYGEVFWTNAPVATRCLLCVVFSSDELATHTLTGKPSPAFYGRERPPKLQLDQRKVDDIVVCVRNRTGGKERVIRATITTKCADTAKKYKRRAKKAQKVAIKEEY</sequence>
<dbReference type="EMBL" id="AE014134">
    <property type="protein sequence ID" value="AAF51239.1"/>
    <property type="molecule type" value="Genomic_DNA"/>
</dbReference>
<dbReference type="EMBL" id="AY069412">
    <property type="protein sequence ID" value="AAL39557.1"/>
    <property type="molecule type" value="mRNA"/>
</dbReference>
<dbReference type="RefSeq" id="NP_608691.1">
    <property type="nucleotide sequence ID" value="NM_134847.3"/>
</dbReference>
<dbReference type="SMR" id="Q9VQD6"/>
<dbReference type="ComplexPortal" id="CPX-2439">
    <property type="entry name" value="ELBA boundary factor complex"/>
</dbReference>
<dbReference type="FunCoup" id="Q9VQD6">
    <property type="interactions" value="19"/>
</dbReference>
<dbReference type="IntAct" id="Q9VQD6">
    <property type="interactions" value="23"/>
</dbReference>
<dbReference type="STRING" id="7227.FBpp0077377"/>
<dbReference type="PaxDb" id="7227-FBpp0077377"/>
<dbReference type="DNASU" id="33442"/>
<dbReference type="EnsemblMetazoa" id="FBtr0077693">
    <property type="protein sequence ID" value="FBpp0077377"/>
    <property type="gene ID" value="FBgn0031435"/>
</dbReference>
<dbReference type="GeneID" id="33442"/>
<dbReference type="KEGG" id="dme:Dmel_CG9883"/>
<dbReference type="UCSC" id="CG9883-RA">
    <property type="organism name" value="d. melanogaster"/>
</dbReference>
<dbReference type="AGR" id="FB:FBgn0031435"/>
<dbReference type="CTD" id="33442"/>
<dbReference type="FlyBase" id="FBgn0031435">
    <property type="gene designation" value="Elba2"/>
</dbReference>
<dbReference type="VEuPathDB" id="VectorBase:FBgn0031435"/>
<dbReference type="eggNOG" id="ENOG502T9C9">
    <property type="taxonomic scope" value="Eukaryota"/>
</dbReference>
<dbReference type="HOGENOM" id="CLU_061882_0_0_1"/>
<dbReference type="InParanoid" id="Q9VQD6"/>
<dbReference type="OMA" id="QYGEVFW"/>
<dbReference type="OrthoDB" id="8186171at2759"/>
<dbReference type="PhylomeDB" id="Q9VQD6"/>
<dbReference type="SignaLink" id="Q9VQD6"/>
<dbReference type="BioGRID-ORCS" id="33442">
    <property type="hits" value="0 hits in 1 CRISPR screen"/>
</dbReference>
<dbReference type="GenomeRNAi" id="33442"/>
<dbReference type="PRO" id="PR:Q9VQD6"/>
<dbReference type="Proteomes" id="UP000000803">
    <property type="component" value="Chromosome 2L"/>
</dbReference>
<dbReference type="Bgee" id="FBgn0031435">
    <property type="expression patterns" value="Expressed in adult abdomen and 41 other cell types or tissues"/>
</dbReference>
<dbReference type="GO" id="GO:0005677">
    <property type="term" value="C:chromatin silencing complex"/>
    <property type="evidence" value="ECO:0000314"/>
    <property type="project" value="FlyBase"/>
</dbReference>
<dbReference type="GO" id="GO:0005634">
    <property type="term" value="C:nucleus"/>
    <property type="evidence" value="ECO:0000314"/>
    <property type="project" value="UniProtKB"/>
</dbReference>
<dbReference type="GO" id="GO:0005704">
    <property type="term" value="C:polytene chromosome band"/>
    <property type="evidence" value="ECO:0000314"/>
    <property type="project" value="FlyBase"/>
</dbReference>
<dbReference type="GO" id="GO:0003682">
    <property type="term" value="F:chromatin binding"/>
    <property type="evidence" value="ECO:0000314"/>
    <property type="project" value="FlyBase"/>
</dbReference>
<dbReference type="GO" id="GO:0043565">
    <property type="term" value="F:sequence-specific DNA binding"/>
    <property type="evidence" value="ECO:0000314"/>
    <property type="project" value="UniProtKB"/>
</dbReference>
<dbReference type="GO" id="GO:0003714">
    <property type="term" value="F:transcription corepressor activity"/>
    <property type="evidence" value="ECO:0007669"/>
    <property type="project" value="InterPro"/>
</dbReference>
<dbReference type="GO" id="GO:0006325">
    <property type="term" value="P:chromatin organization"/>
    <property type="evidence" value="ECO:0000315"/>
    <property type="project" value="FlyBase"/>
</dbReference>
<dbReference type="GO" id="GO:0033696">
    <property type="term" value="P:heterochromatin boundary formation"/>
    <property type="evidence" value="ECO:0000315"/>
    <property type="project" value="FlyBase"/>
</dbReference>
<dbReference type="GO" id="GO:0045892">
    <property type="term" value="P:negative regulation of DNA-templated transcription"/>
    <property type="evidence" value="ECO:0000314"/>
    <property type="project" value="UniProtKB"/>
</dbReference>
<dbReference type="GO" id="GO:0045746">
    <property type="term" value="P:negative regulation of Notch signaling pathway"/>
    <property type="evidence" value="ECO:0007669"/>
    <property type="project" value="InterPro"/>
</dbReference>
<dbReference type="GO" id="GO:0045666">
    <property type="term" value="P:positive regulation of neuron differentiation"/>
    <property type="evidence" value="ECO:0007669"/>
    <property type="project" value="InterPro"/>
</dbReference>
<dbReference type="FunFam" id="1.10.10.2590:FF:000005">
    <property type="entry name" value="Early boundary activity protein 1"/>
    <property type="match status" value="1"/>
</dbReference>
<dbReference type="Gene3D" id="1.10.10.2590">
    <property type="entry name" value="BEN domain"/>
    <property type="match status" value="1"/>
</dbReference>
<dbReference type="InterPro" id="IPR018379">
    <property type="entry name" value="BEN_domain"/>
</dbReference>
<dbReference type="InterPro" id="IPR037496">
    <property type="entry name" value="BEND6-like"/>
</dbReference>
<dbReference type="PANTHER" id="PTHR35346">
    <property type="entry name" value="BEN DOMAIN-CONTAINING PROTEIN 6"/>
    <property type="match status" value="1"/>
</dbReference>
<dbReference type="PANTHER" id="PTHR35346:SF1">
    <property type="entry name" value="BEN DOMAIN-CONTAINING PROTEIN 6"/>
    <property type="match status" value="1"/>
</dbReference>
<dbReference type="Pfam" id="PF10523">
    <property type="entry name" value="BEN"/>
    <property type="match status" value="1"/>
</dbReference>
<dbReference type="SMART" id="SM01025">
    <property type="entry name" value="BEN"/>
    <property type="match status" value="1"/>
</dbReference>
<dbReference type="PROSITE" id="PS51457">
    <property type="entry name" value="BEN"/>
    <property type="match status" value="1"/>
</dbReference>
<reference key="1">
    <citation type="journal article" date="2000" name="Science">
        <title>The genome sequence of Drosophila melanogaster.</title>
        <authorList>
            <person name="Adams M.D."/>
            <person name="Celniker S.E."/>
            <person name="Holt R.A."/>
            <person name="Evans C.A."/>
            <person name="Gocayne J.D."/>
            <person name="Amanatides P.G."/>
            <person name="Scherer S.E."/>
            <person name="Li P.W."/>
            <person name="Hoskins R.A."/>
            <person name="Galle R.F."/>
            <person name="George R.A."/>
            <person name="Lewis S.E."/>
            <person name="Richards S."/>
            <person name="Ashburner M."/>
            <person name="Henderson S.N."/>
            <person name="Sutton G.G."/>
            <person name="Wortman J.R."/>
            <person name="Yandell M.D."/>
            <person name="Zhang Q."/>
            <person name="Chen L.X."/>
            <person name="Brandon R.C."/>
            <person name="Rogers Y.-H.C."/>
            <person name="Blazej R.G."/>
            <person name="Champe M."/>
            <person name="Pfeiffer B.D."/>
            <person name="Wan K.H."/>
            <person name="Doyle C."/>
            <person name="Baxter E.G."/>
            <person name="Helt G."/>
            <person name="Nelson C.R."/>
            <person name="Miklos G.L.G."/>
            <person name="Abril J.F."/>
            <person name="Agbayani A."/>
            <person name="An H.-J."/>
            <person name="Andrews-Pfannkoch C."/>
            <person name="Baldwin D."/>
            <person name="Ballew R.M."/>
            <person name="Basu A."/>
            <person name="Baxendale J."/>
            <person name="Bayraktaroglu L."/>
            <person name="Beasley E.M."/>
            <person name="Beeson K.Y."/>
            <person name="Benos P.V."/>
            <person name="Berman B.P."/>
            <person name="Bhandari D."/>
            <person name="Bolshakov S."/>
            <person name="Borkova D."/>
            <person name="Botchan M.R."/>
            <person name="Bouck J."/>
            <person name="Brokstein P."/>
            <person name="Brottier P."/>
            <person name="Burtis K.C."/>
            <person name="Busam D.A."/>
            <person name="Butler H."/>
            <person name="Cadieu E."/>
            <person name="Center A."/>
            <person name="Chandra I."/>
            <person name="Cherry J.M."/>
            <person name="Cawley S."/>
            <person name="Dahlke C."/>
            <person name="Davenport L.B."/>
            <person name="Davies P."/>
            <person name="de Pablos B."/>
            <person name="Delcher A."/>
            <person name="Deng Z."/>
            <person name="Mays A.D."/>
            <person name="Dew I."/>
            <person name="Dietz S.M."/>
            <person name="Dodson K."/>
            <person name="Doup L.E."/>
            <person name="Downes M."/>
            <person name="Dugan-Rocha S."/>
            <person name="Dunkov B.C."/>
            <person name="Dunn P."/>
            <person name="Durbin K.J."/>
            <person name="Evangelista C.C."/>
            <person name="Ferraz C."/>
            <person name="Ferriera S."/>
            <person name="Fleischmann W."/>
            <person name="Fosler C."/>
            <person name="Gabrielian A.E."/>
            <person name="Garg N.S."/>
            <person name="Gelbart W.M."/>
            <person name="Glasser K."/>
            <person name="Glodek A."/>
            <person name="Gong F."/>
            <person name="Gorrell J.H."/>
            <person name="Gu Z."/>
            <person name="Guan P."/>
            <person name="Harris M."/>
            <person name="Harris N.L."/>
            <person name="Harvey D.A."/>
            <person name="Heiman T.J."/>
            <person name="Hernandez J.R."/>
            <person name="Houck J."/>
            <person name="Hostin D."/>
            <person name="Houston K.A."/>
            <person name="Howland T.J."/>
            <person name="Wei M.-H."/>
            <person name="Ibegwam C."/>
            <person name="Jalali M."/>
            <person name="Kalush F."/>
            <person name="Karpen G.H."/>
            <person name="Ke Z."/>
            <person name="Kennison J.A."/>
            <person name="Ketchum K.A."/>
            <person name="Kimmel B.E."/>
            <person name="Kodira C.D."/>
            <person name="Kraft C.L."/>
            <person name="Kravitz S."/>
            <person name="Kulp D."/>
            <person name="Lai Z."/>
            <person name="Lasko P."/>
            <person name="Lei Y."/>
            <person name="Levitsky A.A."/>
            <person name="Li J.H."/>
            <person name="Li Z."/>
            <person name="Liang Y."/>
            <person name="Lin X."/>
            <person name="Liu X."/>
            <person name="Mattei B."/>
            <person name="McIntosh T.C."/>
            <person name="McLeod M.P."/>
            <person name="McPherson D."/>
            <person name="Merkulov G."/>
            <person name="Milshina N.V."/>
            <person name="Mobarry C."/>
            <person name="Morris J."/>
            <person name="Moshrefi A."/>
            <person name="Mount S.M."/>
            <person name="Moy M."/>
            <person name="Murphy B."/>
            <person name="Murphy L."/>
            <person name="Muzny D.M."/>
            <person name="Nelson D.L."/>
            <person name="Nelson D.R."/>
            <person name="Nelson K.A."/>
            <person name="Nixon K."/>
            <person name="Nusskern D.R."/>
            <person name="Pacleb J.M."/>
            <person name="Palazzolo M."/>
            <person name="Pittman G.S."/>
            <person name="Pan S."/>
            <person name="Pollard J."/>
            <person name="Puri V."/>
            <person name="Reese M.G."/>
            <person name="Reinert K."/>
            <person name="Remington K."/>
            <person name="Saunders R.D.C."/>
            <person name="Scheeler F."/>
            <person name="Shen H."/>
            <person name="Shue B.C."/>
            <person name="Siden-Kiamos I."/>
            <person name="Simpson M."/>
            <person name="Skupski M.P."/>
            <person name="Smith T.J."/>
            <person name="Spier E."/>
            <person name="Spradling A.C."/>
            <person name="Stapleton M."/>
            <person name="Strong R."/>
            <person name="Sun E."/>
            <person name="Svirskas R."/>
            <person name="Tector C."/>
            <person name="Turner R."/>
            <person name="Venter E."/>
            <person name="Wang A.H."/>
            <person name="Wang X."/>
            <person name="Wang Z.-Y."/>
            <person name="Wassarman D.A."/>
            <person name="Weinstock G.M."/>
            <person name="Weissenbach J."/>
            <person name="Williams S.M."/>
            <person name="Woodage T."/>
            <person name="Worley K.C."/>
            <person name="Wu D."/>
            <person name="Yang S."/>
            <person name="Yao Q.A."/>
            <person name="Ye J."/>
            <person name="Yeh R.-F."/>
            <person name="Zaveri J.S."/>
            <person name="Zhan M."/>
            <person name="Zhang G."/>
            <person name="Zhao Q."/>
            <person name="Zheng L."/>
            <person name="Zheng X.H."/>
            <person name="Zhong F.N."/>
            <person name="Zhong W."/>
            <person name="Zhou X."/>
            <person name="Zhu S.C."/>
            <person name="Zhu X."/>
            <person name="Smith H.O."/>
            <person name="Gibbs R.A."/>
            <person name="Myers E.W."/>
            <person name="Rubin G.M."/>
            <person name="Venter J.C."/>
        </authorList>
    </citation>
    <scope>NUCLEOTIDE SEQUENCE [LARGE SCALE GENOMIC DNA]</scope>
    <source>
        <strain>Berkeley</strain>
    </source>
</reference>
<reference key="2">
    <citation type="journal article" date="2002" name="Genome Biol.">
        <title>Annotation of the Drosophila melanogaster euchromatic genome: a systematic review.</title>
        <authorList>
            <person name="Misra S."/>
            <person name="Crosby M.A."/>
            <person name="Mungall C.J."/>
            <person name="Matthews B.B."/>
            <person name="Campbell K.S."/>
            <person name="Hradecky P."/>
            <person name="Huang Y."/>
            <person name="Kaminker J.S."/>
            <person name="Millburn G.H."/>
            <person name="Prochnik S.E."/>
            <person name="Smith C.D."/>
            <person name="Tupy J.L."/>
            <person name="Whitfield E.J."/>
            <person name="Bayraktaroglu L."/>
            <person name="Berman B.P."/>
            <person name="Bettencourt B.R."/>
            <person name="Celniker S.E."/>
            <person name="de Grey A.D.N.J."/>
            <person name="Drysdale R.A."/>
            <person name="Harris N.L."/>
            <person name="Richter J."/>
            <person name="Russo S."/>
            <person name="Schroeder A.J."/>
            <person name="Shu S.Q."/>
            <person name="Stapleton M."/>
            <person name="Yamada C."/>
            <person name="Ashburner M."/>
            <person name="Gelbart W.M."/>
            <person name="Rubin G.M."/>
            <person name="Lewis S.E."/>
        </authorList>
    </citation>
    <scope>GENOME REANNOTATION</scope>
    <source>
        <strain>Berkeley</strain>
    </source>
</reference>
<reference key="3">
    <citation type="journal article" date="2002" name="Genome Biol.">
        <title>A Drosophila full-length cDNA resource.</title>
        <authorList>
            <person name="Stapleton M."/>
            <person name="Carlson J.W."/>
            <person name="Brokstein P."/>
            <person name="Yu C."/>
            <person name="Champe M."/>
            <person name="George R.A."/>
            <person name="Guarin H."/>
            <person name="Kronmiller B."/>
            <person name="Pacleb J.M."/>
            <person name="Park S."/>
            <person name="Wan K.H."/>
            <person name="Rubin G.M."/>
            <person name="Celniker S.E."/>
        </authorList>
    </citation>
    <scope>NUCLEOTIDE SEQUENCE [LARGE SCALE MRNA]</scope>
    <source>
        <strain>Berkeley</strain>
        <tissue>Embryo</tissue>
    </source>
</reference>
<reference key="4">
    <citation type="journal article" date="2012" name="Elife">
        <title>Elba, a novel developmentally regulated chromatin boundary factor is a hetero-tripartite DNA binding complex.</title>
        <authorList>
            <person name="Aoki T."/>
            <person name="Sarkeshik A."/>
            <person name="Yates J."/>
            <person name="Schedl P."/>
        </authorList>
    </citation>
    <scope>IDENTIFICATION BY MASS SPECTROMETRY</scope>
    <scope>FUNCTION</scope>
    <scope>SUBUNIT</scope>
    <scope>SUBCELLULAR LOCATION</scope>
    <scope>DEVELOPMENTAL STAGE</scope>
    <scope>DOMAIN BEN</scope>
    <scope>DNA-BINDING</scope>
</reference>
<reference key="5">
    <citation type="journal article" date="2015" name="Genes Dev.">
        <title>Common and distinct DNA-binding and regulatory activities of the BEN-solo transcription factor family.</title>
        <authorList>
            <person name="Dai Q."/>
            <person name="Ren A."/>
            <person name="Westholm J.O."/>
            <person name="Duan H."/>
            <person name="Patel D.J."/>
            <person name="Lai E.C."/>
        </authorList>
    </citation>
    <scope>FUNCTION</scope>
    <scope>SUBCELLULAR LOCATION</scope>
    <scope>DEVELOPMENTAL STAGE</scope>
    <scope>DNA-BINDING</scope>
    <scope>DOMAIN BEN</scope>
</reference>
<gene>
    <name evidence="5 6" type="primary">Elba2</name>
    <name evidence="6" type="ORF">CG9883</name>
</gene>
<comment type="function">
    <text evidence="3 4">The heterotrimeric Elba complex is required for chromatin domain boundary function during early embryogenesis. It binds to a 8-bp sequence 5'-CCAATAAG-3' in the Fab-7 insulator or boundary element in the bithorax complex and contributes to its insulator or boundary activity (PubMed:23240086). Elba2 can act as a transcriptional repressor and binds the palindromic sequence 5'-CCAATTGG-3' to mediate transcriptional repression (PubMed:25561495).</text>
</comment>
<comment type="subunit">
    <text evidence="3">The heterotrimeric Elba complex consists of Elba1, Elba2 and Elba3.</text>
</comment>
<comment type="subcellular location">
    <subcellularLocation>
        <location evidence="3 4">Nucleus</location>
    </subcellularLocation>
</comment>
<comment type="developmental stage">
    <text evidence="3 4">Expressed throughout much embryogenesis. Expression peaks at the blastoderm stage (2-4 hours) and at later embryonic stages expression corresponds mostly to the procephalic ectoderm primordium.</text>
</comment>
<comment type="domain">
    <text evidence="3 4">The BEN domain mediates DNA-binding.</text>
</comment>